<dbReference type="EC" id="3.1.-.-"/>
<dbReference type="EMBL" id="U32222">
    <property type="protein sequence ID" value="AAC34183.1"/>
    <property type="molecule type" value="Genomic_DNA"/>
</dbReference>
<dbReference type="PIR" id="S10629">
    <property type="entry name" value="S10629"/>
</dbReference>
<dbReference type="RefSeq" id="NP_052286.1">
    <property type="nucleotide sequence ID" value="NC_001317.1"/>
</dbReference>
<dbReference type="SMR" id="P41060"/>
<dbReference type="KEGG" id="vg:1262454"/>
<dbReference type="OrthoDB" id="23067at10239"/>
<dbReference type="Proteomes" id="UP000000369">
    <property type="component" value="Segment"/>
</dbReference>
<dbReference type="GO" id="GO:0008408">
    <property type="term" value="F:3'-5' exonuclease activity"/>
    <property type="evidence" value="ECO:0007669"/>
    <property type="project" value="TreeGrafter"/>
</dbReference>
<dbReference type="GO" id="GO:0003676">
    <property type="term" value="F:nucleic acid binding"/>
    <property type="evidence" value="ECO:0007669"/>
    <property type="project" value="InterPro"/>
</dbReference>
<dbReference type="CDD" id="cd06127">
    <property type="entry name" value="DEDDh"/>
    <property type="match status" value="1"/>
</dbReference>
<dbReference type="Gene3D" id="3.30.420.10">
    <property type="entry name" value="Ribonuclease H-like superfamily/Ribonuclease H"/>
    <property type="match status" value="1"/>
</dbReference>
<dbReference type="InterPro" id="IPR013520">
    <property type="entry name" value="Exonuclease_RNaseT/DNA_pol3"/>
</dbReference>
<dbReference type="InterPro" id="IPR012337">
    <property type="entry name" value="RNaseH-like_sf"/>
</dbReference>
<dbReference type="InterPro" id="IPR036397">
    <property type="entry name" value="RNaseH_sf"/>
</dbReference>
<dbReference type="PANTHER" id="PTHR30231">
    <property type="entry name" value="DNA POLYMERASE III SUBUNIT EPSILON"/>
    <property type="match status" value="1"/>
</dbReference>
<dbReference type="PANTHER" id="PTHR30231:SF4">
    <property type="entry name" value="PROTEIN NEN2"/>
    <property type="match status" value="1"/>
</dbReference>
<dbReference type="Pfam" id="PF00929">
    <property type="entry name" value="RNase_T"/>
    <property type="match status" value="1"/>
</dbReference>
<dbReference type="SMART" id="SM00479">
    <property type="entry name" value="EXOIII"/>
    <property type="match status" value="1"/>
</dbReference>
<dbReference type="SUPFAM" id="SSF53098">
    <property type="entry name" value="Ribonuclease H-like"/>
    <property type="match status" value="1"/>
</dbReference>
<accession>P41060</accession>
<protein>
    <recommendedName>
        <fullName>Uncharacterized exonuclease CP81</fullName>
        <ecNumber>3.1.-.-</ecNumber>
    </recommendedName>
</protein>
<reference key="1">
    <citation type="journal article" date="1990" name="J. Mol. Biol.">
        <title>DNA replication studies with coliphage 186. III. A single phage gene is required for phage 186 replication.</title>
        <authorList>
            <person name="Sivaprasad A.V."/>
            <person name="Jarvinen R."/>
            <person name="Puspurs A."/>
            <person name="Egan J.B."/>
        </authorList>
    </citation>
    <scope>NUCLEOTIDE SEQUENCE [GENOMIC DNA]</scope>
    <source>
        <strain>186CITSP</strain>
    </source>
</reference>
<organismHost>
    <name type="scientific">Escherichia coli</name>
    <dbReference type="NCBI Taxonomy" id="562"/>
</organismHost>
<proteinExistence type="predicted"/>
<name>CP81_BP186</name>
<feature type="chain" id="PRO_0000165302" description="Uncharacterized exonuclease CP81">
    <location>
        <begin position="1"/>
        <end position="194"/>
    </location>
</feature>
<feature type="domain" description="Exonuclease">
    <location>
        <begin position="20"/>
        <end position="185"/>
    </location>
</feature>
<keyword id="KW-0269">Exonuclease</keyword>
<keyword id="KW-0378">Hydrolase</keyword>
<keyword id="KW-0540">Nuclease</keyword>
<keyword id="KW-1185">Reference proteome</keyword>
<organism>
    <name type="scientific">Escherichia phage 186</name>
    <name type="common">Bacteriophage 186</name>
    <dbReference type="NCBI Taxonomy" id="29252"/>
    <lineage>
        <taxon>Viruses</taxon>
        <taxon>Duplodnaviria</taxon>
        <taxon>Heunggongvirae</taxon>
        <taxon>Uroviricota</taxon>
        <taxon>Caudoviricetes</taxon>
        <taxon>Peduoviridae</taxon>
        <taxon>Eganvirus</taxon>
    </lineage>
</organism>
<sequence>MSITNATISQRAKKWLEDDRIFIDTETTGLGDDAEIVEICLIDSAGFIMLNTLVKPTKPIPAEATAIHGITDEMVMYAPTWKDIHGAVASLFFEYGFVIYNADYDTRLIYQTAKLYGLENDGFCYFLNERSACAMMLYAEYRGEPGRFKGYKWHKLVDAAAHEGVSVEGKAHRALADCRMTLGIIDALAKGGAA</sequence>
<gene>
    <name type="primary">CP81</name>
</gene>